<organism>
    <name type="scientific">Shewanella frigidimarina (strain NCIMB 400)</name>
    <dbReference type="NCBI Taxonomy" id="318167"/>
    <lineage>
        <taxon>Bacteria</taxon>
        <taxon>Pseudomonadati</taxon>
        <taxon>Pseudomonadota</taxon>
        <taxon>Gammaproteobacteria</taxon>
        <taxon>Alteromonadales</taxon>
        <taxon>Shewanellaceae</taxon>
        <taxon>Shewanella</taxon>
    </lineage>
</organism>
<reference key="1">
    <citation type="submission" date="2006-08" db="EMBL/GenBank/DDBJ databases">
        <title>Complete sequence of Shewanella frigidimarina NCIMB 400.</title>
        <authorList>
            <consortium name="US DOE Joint Genome Institute"/>
            <person name="Copeland A."/>
            <person name="Lucas S."/>
            <person name="Lapidus A."/>
            <person name="Barry K."/>
            <person name="Detter J.C."/>
            <person name="Glavina del Rio T."/>
            <person name="Hammon N."/>
            <person name="Israni S."/>
            <person name="Dalin E."/>
            <person name="Tice H."/>
            <person name="Pitluck S."/>
            <person name="Fredrickson J.K."/>
            <person name="Kolker E."/>
            <person name="McCuel L.A."/>
            <person name="DiChristina T."/>
            <person name="Nealson K.H."/>
            <person name="Newman D."/>
            <person name="Tiedje J.M."/>
            <person name="Zhou J."/>
            <person name="Romine M.F."/>
            <person name="Culley D.E."/>
            <person name="Serres M."/>
            <person name="Chertkov O."/>
            <person name="Brettin T."/>
            <person name="Bruce D."/>
            <person name="Han C."/>
            <person name="Tapia R."/>
            <person name="Gilna P."/>
            <person name="Schmutz J."/>
            <person name="Larimer F."/>
            <person name="Land M."/>
            <person name="Hauser L."/>
            <person name="Kyrpides N."/>
            <person name="Mikhailova N."/>
            <person name="Richardson P."/>
        </authorList>
    </citation>
    <scope>NUCLEOTIDE SEQUENCE [LARGE SCALE GENOMIC DNA]</scope>
    <source>
        <strain>NCIMB 400</strain>
    </source>
</reference>
<sequence>MSNAVKKTGVKKVVLAYSGGLDTSAIIPWLKETYDDCEIIAFCADVGQGEEELVGLTEKALASGASECHIVDLKEEFVADYIYPTIATGAIYEGTYLLGTSMARPIIAKAQVEVARKVGADAVCHGCTGKGNDQVRFEGCFAALAPDLKVIAPWREWEMRSREDLLAYLAERDIKTSASATKIYSRDANAWHISHEGGELEDPWNEPSKGVWTLTVAPEDAPNEPEYVSLAVKHGRVTHVNDEALSPYAALMKLNDIAGKHGVGRIDITENRLVGMKSRGCYETPGGTVMFAGLRAIEELVLDKTSRTWREQIAGQMSHLVYDGRWFTPLCKSLIAASESLAESVNGDVVIKLYKGQATAVKKRSPNSLYSESFATFGEDDVYDQKHAEGFIRLYSLASRIRALNTK</sequence>
<comment type="catalytic activity">
    <reaction evidence="1">
        <text>L-citrulline + L-aspartate + ATP = 2-(N(omega)-L-arginino)succinate + AMP + diphosphate + H(+)</text>
        <dbReference type="Rhea" id="RHEA:10932"/>
        <dbReference type="ChEBI" id="CHEBI:15378"/>
        <dbReference type="ChEBI" id="CHEBI:29991"/>
        <dbReference type="ChEBI" id="CHEBI:30616"/>
        <dbReference type="ChEBI" id="CHEBI:33019"/>
        <dbReference type="ChEBI" id="CHEBI:57472"/>
        <dbReference type="ChEBI" id="CHEBI:57743"/>
        <dbReference type="ChEBI" id="CHEBI:456215"/>
        <dbReference type="EC" id="6.3.4.5"/>
    </reaction>
</comment>
<comment type="pathway">
    <text evidence="1">Amino-acid biosynthesis; L-arginine biosynthesis; L-arginine from L-ornithine and carbamoyl phosphate: step 2/3.</text>
</comment>
<comment type="subunit">
    <text evidence="1">Homotetramer.</text>
</comment>
<comment type="subcellular location">
    <subcellularLocation>
        <location evidence="1">Cytoplasm</location>
    </subcellularLocation>
</comment>
<comment type="similarity">
    <text evidence="1">Belongs to the argininosuccinate synthase family. Type 1 subfamily.</text>
</comment>
<protein>
    <recommendedName>
        <fullName evidence="1">Argininosuccinate synthase</fullName>
        <ecNumber evidence="1">6.3.4.5</ecNumber>
    </recommendedName>
    <alternativeName>
        <fullName evidence="1">Citrulline--aspartate ligase</fullName>
    </alternativeName>
</protein>
<keyword id="KW-0028">Amino-acid biosynthesis</keyword>
<keyword id="KW-0055">Arginine biosynthesis</keyword>
<keyword id="KW-0067">ATP-binding</keyword>
<keyword id="KW-0963">Cytoplasm</keyword>
<keyword id="KW-0436">Ligase</keyword>
<keyword id="KW-0547">Nucleotide-binding</keyword>
<keyword id="KW-1185">Reference proteome</keyword>
<name>ASSY_SHEFN</name>
<proteinExistence type="inferred from homology"/>
<evidence type="ECO:0000255" key="1">
    <source>
        <dbReference type="HAMAP-Rule" id="MF_00005"/>
    </source>
</evidence>
<feature type="chain" id="PRO_0000263970" description="Argininosuccinate synthase">
    <location>
        <begin position="1"/>
        <end position="407"/>
    </location>
</feature>
<feature type="binding site" evidence="1">
    <location>
        <begin position="16"/>
        <end position="24"/>
    </location>
    <ligand>
        <name>ATP</name>
        <dbReference type="ChEBI" id="CHEBI:30616"/>
    </ligand>
</feature>
<feature type="binding site" evidence="1">
    <location>
        <position position="44"/>
    </location>
    <ligand>
        <name>ATP</name>
        <dbReference type="ChEBI" id="CHEBI:30616"/>
    </ligand>
</feature>
<feature type="binding site" evidence="1">
    <location>
        <position position="96"/>
    </location>
    <ligand>
        <name>L-citrulline</name>
        <dbReference type="ChEBI" id="CHEBI:57743"/>
    </ligand>
</feature>
<feature type="binding site" evidence="1">
    <location>
        <position position="101"/>
    </location>
    <ligand>
        <name>L-citrulline</name>
        <dbReference type="ChEBI" id="CHEBI:57743"/>
    </ligand>
</feature>
<feature type="binding site" evidence="1">
    <location>
        <position position="126"/>
    </location>
    <ligand>
        <name>ATP</name>
        <dbReference type="ChEBI" id="CHEBI:30616"/>
    </ligand>
</feature>
<feature type="binding site" evidence="1">
    <location>
        <position position="128"/>
    </location>
    <ligand>
        <name>L-aspartate</name>
        <dbReference type="ChEBI" id="CHEBI:29991"/>
    </ligand>
</feature>
<feature type="binding site" evidence="1">
    <location>
        <position position="132"/>
    </location>
    <ligand>
        <name>L-aspartate</name>
        <dbReference type="ChEBI" id="CHEBI:29991"/>
    </ligand>
</feature>
<feature type="binding site" evidence="1">
    <location>
        <position position="132"/>
    </location>
    <ligand>
        <name>L-citrulline</name>
        <dbReference type="ChEBI" id="CHEBI:57743"/>
    </ligand>
</feature>
<feature type="binding site" evidence="1">
    <location>
        <position position="133"/>
    </location>
    <ligand>
        <name>L-aspartate</name>
        <dbReference type="ChEBI" id="CHEBI:29991"/>
    </ligand>
</feature>
<feature type="binding site" evidence="1">
    <location>
        <position position="136"/>
    </location>
    <ligand>
        <name>L-citrulline</name>
        <dbReference type="ChEBI" id="CHEBI:57743"/>
    </ligand>
</feature>
<feature type="binding site" evidence="1">
    <location>
        <position position="185"/>
    </location>
    <ligand>
        <name>L-citrulline</name>
        <dbReference type="ChEBI" id="CHEBI:57743"/>
    </ligand>
</feature>
<feature type="binding site" evidence="1">
    <location>
        <position position="194"/>
    </location>
    <ligand>
        <name>L-citrulline</name>
        <dbReference type="ChEBI" id="CHEBI:57743"/>
    </ligand>
</feature>
<feature type="binding site" evidence="1">
    <location>
        <position position="270"/>
    </location>
    <ligand>
        <name>L-citrulline</name>
        <dbReference type="ChEBI" id="CHEBI:57743"/>
    </ligand>
</feature>
<feature type="binding site" evidence="1">
    <location>
        <position position="282"/>
    </location>
    <ligand>
        <name>L-citrulline</name>
        <dbReference type="ChEBI" id="CHEBI:57743"/>
    </ligand>
</feature>
<gene>
    <name evidence="1" type="primary">argG</name>
    <name type="ordered locus">Sfri_0194</name>
</gene>
<dbReference type="EC" id="6.3.4.5" evidence="1"/>
<dbReference type="EMBL" id="CP000447">
    <property type="protein sequence ID" value="ABI70057.1"/>
    <property type="molecule type" value="Genomic_DNA"/>
</dbReference>
<dbReference type="RefSeq" id="WP_011635684.1">
    <property type="nucleotide sequence ID" value="NC_008345.1"/>
</dbReference>
<dbReference type="SMR" id="Q089K8"/>
<dbReference type="STRING" id="318167.Sfri_0194"/>
<dbReference type="KEGG" id="sfr:Sfri_0194"/>
<dbReference type="eggNOG" id="COG0137">
    <property type="taxonomic scope" value="Bacteria"/>
</dbReference>
<dbReference type="HOGENOM" id="CLU_032784_4_2_6"/>
<dbReference type="OrthoDB" id="9801641at2"/>
<dbReference type="UniPathway" id="UPA00068">
    <property type="reaction ID" value="UER00113"/>
</dbReference>
<dbReference type="Proteomes" id="UP000000684">
    <property type="component" value="Chromosome"/>
</dbReference>
<dbReference type="GO" id="GO:0005737">
    <property type="term" value="C:cytoplasm"/>
    <property type="evidence" value="ECO:0007669"/>
    <property type="project" value="UniProtKB-SubCell"/>
</dbReference>
<dbReference type="GO" id="GO:0004055">
    <property type="term" value="F:argininosuccinate synthase activity"/>
    <property type="evidence" value="ECO:0007669"/>
    <property type="project" value="UniProtKB-UniRule"/>
</dbReference>
<dbReference type="GO" id="GO:0005524">
    <property type="term" value="F:ATP binding"/>
    <property type="evidence" value="ECO:0007669"/>
    <property type="project" value="UniProtKB-UniRule"/>
</dbReference>
<dbReference type="GO" id="GO:0000053">
    <property type="term" value="P:argininosuccinate metabolic process"/>
    <property type="evidence" value="ECO:0007669"/>
    <property type="project" value="TreeGrafter"/>
</dbReference>
<dbReference type="GO" id="GO:0006526">
    <property type="term" value="P:L-arginine biosynthetic process"/>
    <property type="evidence" value="ECO:0007669"/>
    <property type="project" value="UniProtKB-UniRule"/>
</dbReference>
<dbReference type="GO" id="GO:0000050">
    <property type="term" value="P:urea cycle"/>
    <property type="evidence" value="ECO:0007669"/>
    <property type="project" value="TreeGrafter"/>
</dbReference>
<dbReference type="CDD" id="cd01999">
    <property type="entry name" value="ASS"/>
    <property type="match status" value="1"/>
</dbReference>
<dbReference type="FunFam" id="1.20.5.470:FF:000005">
    <property type="entry name" value="Argininosuccinate synthase"/>
    <property type="match status" value="1"/>
</dbReference>
<dbReference type="FunFam" id="3.40.50.620:FF:000019">
    <property type="entry name" value="Argininosuccinate synthase"/>
    <property type="match status" value="1"/>
</dbReference>
<dbReference type="FunFam" id="3.90.1260.10:FF:000007">
    <property type="entry name" value="Argininosuccinate synthase"/>
    <property type="match status" value="1"/>
</dbReference>
<dbReference type="Gene3D" id="3.90.1260.10">
    <property type="entry name" value="Argininosuccinate synthetase, chain A, domain 2"/>
    <property type="match status" value="1"/>
</dbReference>
<dbReference type="Gene3D" id="3.40.50.620">
    <property type="entry name" value="HUPs"/>
    <property type="match status" value="1"/>
</dbReference>
<dbReference type="Gene3D" id="1.20.5.470">
    <property type="entry name" value="Single helix bin"/>
    <property type="match status" value="1"/>
</dbReference>
<dbReference type="HAMAP" id="MF_00005">
    <property type="entry name" value="Arg_succ_synth_type1"/>
    <property type="match status" value="1"/>
</dbReference>
<dbReference type="InterPro" id="IPR048268">
    <property type="entry name" value="Arginosuc_syn_C"/>
</dbReference>
<dbReference type="InterPro" id="IPR048267">
    <property type="entry name" value="Arginosuc_syn_N"/>
</dbReference>
<dbReference type="InterPro" id="IPR001518">
    <property type="entry name" value="Arginosuc_synth"/>
</dbReference>
<dbReference type="InterPro" id="IPR018223">
    <property type="entry name" value="Arginosuc_synth_CS"/>
</dbReference>
<dbReference type="InterPro" id="IPR023434">
    <property type="entry name" value="Arginosuc_synth_type_1_subfam"/>
</dbReference>
<dbReference type="InterPro" id="IPR024074">
    <property type="entry name" value="AS_cat/multimer_dom_body"/>
</dbReference>
<dbReference type="InterPro" id="IPR014729">
    <property type="entry name" value="Rossmann-like_a/b/a_fold"/>
</dbReference>
<dbReference type="NCBIfam" id="TIGR00032">
    <property type="entry name" value="argG"/>
    <property type="match status" value="1"/>
</dbReference>
<dbReference type="NCBIfam" id="NF001770">
    <property type="entry name" value="PRK00509.1"/>
    <property type="match status" value="1"/>
</dbReference>
<dbReference type="PANTHER" id="PTHR11587">
    <property type="entry name" value="ARGININOSUCCINATE SYNTHASE"/>
    <property type="match status" value="1"/>
</dbReference>
<dbReference type="PANTHER" id="PTHR11587:SF2">
    <property type="entry name" value="ARGININOSUCCINATE SYNTHASE"/>
    <property type="match status" value="1"/>
</dbReference>
<dbReference type="Pfam" id="PF20979">
    <property type="entry name" value="Arginosuc_syn_C"/>
    <property type="match status" value="1"/>
</dbReference>
<dbReference type="Pfam" id="PF00764">
    <property type="entry name" value="Arginosuc_synth"/>
    <property type="match status" value="1"/>
</dbReference>
<dbReference type="SUPFAM" id="SSF52402">
    <property type="entry name" value="Adenine nucleotide alpha hydrolases-like"/>
    <property type="match status" value="1"/>
</dbReference>
<dbReference type="SUPFAM" id="SSF69864">
    <property type="entry name" value="Argininosuccinate synthetase, C-terminal domain"/>
    <property type="match status" value="1"/>
</dbReference>
<dbReference type="PROSITE" id="PS00564">
    <property type="entry name" value="ARGININOSUCCIN_SYN_1"/>
    <property type="match status" value="1"/>
</dbReference>
<dbReference type="PROSITE" id="PS00565">
    <property type="entry name" value="ARGININOSUCCIN_SYN_2"/>
    <property type="match status" value="1"/>
</dbReference>
<accession>Q089K8</accession>